<dbReference type="EC" id="2.7.8.7" evidence="1"/>
<dbReference type="EMBL" id="AE016822">
    <property type="protein sequence ID" value="AAT89711.1"/>
    <property type="molecule type" value="Genomic_DNA"/>
</dbReference>
<dbReference type="RefSeq" id="WP_011186697.1">
    <property type="nucleotide sequence ID" value="NC_006087.1"/>
</dbReference>
<dbReference type="SMR" id="Q6AD33"/>
<dbReference type="STRING" id="281090.Lxx19960"/>
<dbReference type="KEGG" id="lxx:Lxx19960"/>
<dbReference type="eggNOG" id="COG0736">
    <property type="taxonomic scope" value="Bacteria"/>
</dbReference>
<dbReference type="HOGENOM" id="CLU_089696_0_0_11"/>
<dbReference type="Proteomes" id="UP000001306">
    <property type="component" value="Chromosome"/>
</dbReference>
<dbReference type="GO" id="GO:0005737">
    <property type="term" value="C:cytoplasm"/>
    <property type="evidence" value="ECO:0007669"/>
    <property type="project" value="UniProtKB-SubCell"/>
</dbReference>
<dbReference type="GO" id="GO:0008897">
    <property type="term" value="F:holo-[acyl-carrier-protein] synthase activity"/>
    <property type="evidence" value="ECO:0007669"/>
    <property type="project" value="UniProtKB-UniRule"/>
</dbReference>
<dbReference type="GO" id="GO:0000287">
    <property type="term" value="F:magnesium ion binding"/>
    <property type="evidence" value="ECO:0007669"/>
    <property type="project" value="UniProtKB-UniRule"/>
</dbReference>
<dbReference type="GO" id="GO:0006633">
    <property type="term" value="P:fatty acid biosynthetic process"/>
    <property type="evidence" value="ECO:0007669"/>
    <property type="project" value="UniProtKB-UniRule"/>
</dbReference>
<dbReference type="Gene3D" id="3.90.470.20">
    <property type="entry name" value="4'-phosphopantetheinyl transferase domain"/>
    <property type="match status" value="1"/>
</dbReference>
<dbReference type="HAMAP" id="MF_00101">
    <property type="entry name" value="AcpS"/>
    <property type="match status" value="1"/>
</dbReference>
<dbReference type="InterPro" id="IPR008278">
    <property type="entry name" value="4-PPantetheinyl_Trfase_dom"/>
</dbReference>
<dbReference type="InterPro" id="IPR037143">
    <property type="entry name" value="4-PPantetheinyl_Trfase_dom_sf"/>
</dbReference>
<dbReference type="InterPro" id="IPR002582">
    <property type="entry name" value="ACPS"/>
</dbReference>
<dbReference type="InterPro" id="IPR004568">
    <property type="entry name" value="Ppantetheine-prot_Trfase_dom"/>
</dbReference>
<dbReference type="NCBIfam" id="TIGR00516">
    <property type="entry name" value="acpS"/>
    <property type="match status" value="1"/>
</dbReference>
<dbReference type="NCBIfam" id="TIGR00556">
    <property type="entry name" value="pantethn_trn"/>
    <property type="match status" value="1"/>
</dbReference>
<dbReference type="NCBIfam" id="NF000832">
    <property type="entry name" value="PRK00070.3-2"/>
    <property type="match status" value="1"/>
</dbReference>
<dbReference type="Pfam" id="PF01648">
    <property type="entry name" value="ACPS"/>
    <property type="match status" value="1"/>
</dbReference>
<dbReference type="SUPFAM" id="SSF56214">
    <property type="entry name" value="4'-phosphopantetheinyl transferase"/>
    <property type="match status" value="1"/>
</dbReference>
<evidence type="ECO:0000255" key="1">
    <source>
        <dbReference type="HAMAP-Rule" id="MF_00101"/>
    </source>
</evidence>
<comment type="function">
    <text evidence="1">Transfers the 4'-phosphopantetheine moiety from coenzyme A to a Ser of acyl-carrier-protein.</text>
</comment>
<comment type="catalytic activity">
    <reaction evidence="1">
        <text>apo-[ACP] + CoA = holo-[ACP] + adenosine 3',5'-bisphosphate + H(+)</text>
        <dbReference type="Rhea" id="RHEA:12068"/>
        <dbReference type="Rhea" id="RHEA-COMP:9685"/>
        <dbReference type="Rhea" id="RHEA-COMP:9690"/>
        <dbReference type="ChEBI" id="CHEBI:15378"/>
        <dbReference type="ChEBI" id="CHEBI:29999"/>
        <dbReference type="ChEBI" id="CHEBI:57287"/>
        <dbReference type="ChEBI" id="CHEBI:58343"/>
        <dbReference type="ChEBI" id="CHEBI:64479"/>
        <dbReference type="EC" id="2.7.8.7"/>
    </reaction>
</comment>
<comment type="cofactor">
    <cofactor evidence="1">
        <name>Mg(2+)</name>
        <dbReference type="ChEBI" id="CHEBI:18420"/>
    </cofactor>
</comment>
<comment type="subcellular location">
    <subcellularLocation>
        <location evidence="1">Cytoplasm</location>
    </subcellularLocation>
</comment>
<comment type="similarity">
    <text evidence="1">Belongs to the P-Pant transferase superfamily. AcpS family.</text>
</comment>
<reference key="1">
    <citation type="journal article" date="2004" name="Mol. Plant Microbe Interact.">
        <title>The genome sequence of the Gram-positive sugarcane pathogen Leifsonia xyli subsp. xyli.</title>
        <authorList>
            <person name="Monteiro-Vitorello C.B."/>
            <person name="Camargo L.E.A."/>
            <person name="Van Sluys M.A."/>
            <person name="Kitajima J.P."/>
            <person name="Truffi D."/>
            <person name="do Amaral A.M."/>
            <person name="Harakava R."/>
            <person name="de Oliveira J.C.F."/>
            <person name="Wood D."/>
            <person name="de Oliveira M.C."/>
            <person name="Miyaki C.Y."/>
            <person name="Takita M.A."/>
            <person name="da Silva A.C.R."/>
            <person name="Furlan L.R."/>
            <person name="Carraro D.M."/>
            <person name="Camarotte G."/>
            <person name="Almeida N.F. Jr."/>
            <person name="Carrer H."/>
            <person name="Coutinho L.L."/>
            <person name="El-Dorry H.A."/>
            <person name="Ferro M.I.T."/>
            <person name="Gagliardi P.R."/>
            <person name="Giglioti E."/>
            <person name="Goldman M.H.S."/>
            <person name="Goldman G.H."/>
            <person name="Kimura E.T."/>
            <person name="Ferro E.S."/>
            <person name="Kuramae E.E."/>
            <person name="Lemos E.G.M."/>
            <person name="Lemos M.V.F."/>
            <person name="Mauro S.M.Z."/>
            <person name="Machado M.A."/>
            <person name="Marino C.L."/>
            <person name="Menck C.F."/>
            <person name="Nunes L.R."/>
            <person name="Oliveira R.C."/>
            <person name="Pereira G.G."/>
            <person name="Siqueira W."/>
            <person name="de Souza A.A."/>
            <person name="Tsai S.M."/>
            <person name="Zanca A.S."/>
            <person name="Simpson A.J.G."/>
            <person name="Brumbley S.M."/>
            <person name="Setubal J.C."/>
        </authorList>
    </citation>
    <scope>NUCLEOTIDE SEQUENCE [LARGE SCALE GENOMIC DNA]</scope>
    <source>
        <strain>CTCB07</strain>
    </source>
</reference>
<name>ACPS_LEIXX</name>
<gene>
    <name evidence="1" type="primary">acpS</name>
    <name type="ordered locus">Lxx19960</name>
</gene>
<sequence length="118" mass="12894">MIAGIGVDVVDLARFGRSLARTPALRDRLFTEAERGLPVHSLAARFAAKEALIKALGGSEGVRWHDLEIVSDEERNPAFVLRNVVERQALERGIAHIHVSMSHDAGIATAFVVLERDS</sequence>
<protein>
    <recommendedName>
        <fullName evidence="1">Holo-[acyl-carrier-protein] synthase</fullName>
        <shortName evidence="1">Holo-ACP synthase</shortName>
        <ecNumber evidence="1">2.7.8.7</ecNumber>
    </recommendedName>
    <alternativeName>
        <fullName evidence="1">4'-phosphopantetheinyl transferase AcpS</fullName>
    </alternativeName>
</protein>
<accession>Q6AD33</accession>
<feature type="chain" id="PRO_0000175660" description="Holo-[acyl-carrier-protein] synthase">
    <location>
        <begin position="1"/>
        <end position="118"/>
    </location>
</feature>
<feature type="binding site" evidence="1">
    <location>
        <position position="8"/>
    </location>
    <ligand>
        <name>Mg(2+)</name>
        <dbReference type="ChEBI" id="CHEBI:18420"/>
    </ligand>
</feature>
<feature type="binding site" evidence="1">
    <location>
        <position position="50"/>
    </location>
    <ligand>
        <name>Mg(2+)</name>
        <dbReference type="ChEBI" id="CHEBI:18420"/>
    </ligand>
</feature>
<organism>
    <name type="scientific">Leifsonia xyli subsp. xyli (strain CTCB07)</name>
    <dbReference type="NCBI Taxonomy" id="281090"/>
    <lineage>
        <taxon>Bacteria</taxon>
        <taxon>Bacillati</taxon>
        <taxon>Actinomycetota</taxon>
        <taxon>Actinomycetes</taxon>
        <taxon>Micrococcales</taxon>
        <taxon>Microbacteriaceae</taxon>
        <taxon>Leifsonia</taxon>
    </lineage>
</organism>
<keyword id="KW-0963">Cytoplasm</keyword>
<keyword id="KW-0275">Fatty acid biosynthesis</keyword>
<keyword id="KW-0276">Fatty acid metabolism</keyword>
<keyword id="KW-0444">Lipid biosynthesis</keyword>
<keyword id="KW-0443">Lipid metabolism</keyword>
<keyword id="KW-0460">Magnesium</keyword>
<keyword id="KW-0479">Metal-binding</keyword>
<keyword id="KW-1185">Reference proteome</keyword>
<keyword id="KW-0808">Transferase</keyword>
<proteinExistence type="inferred from homology"/>